<name>NXPH2_BOVIN</name>
<comment type="function">
    <text evidence="3">May be signaling molecules that resemble neuropeptides and that act by binding to alpha-neurexins and possibly other receptors.</text>
</comment>
<comment type="subcellular location">
    <subcellularLocation>
        <location evidence="3">Secreted</location>
    </subcellularLocation>
</comment>
<comment type="tissue specificity">
    <text>Brain, only in a scattered subpopulation of neurons that probably represent inhibitory interneurons.</text>
</comment>
<comment type="PTM">
    <text evidence="1">May be proteolytically processed at the boundary between the N-terminal non-conserved and the central conserved domain in neuron-like cells.</text>
</comment>
<comment type="similarity">
    <text evidence="3">Belongs to the neurexophilin family.</text>
</comment>
<keyword id="KW-0903">Direct protein sequencing</keyword>
<keyword id="KW-0325">Glycoprotein</keyword>
<keyword id="KW-1185">Reference proteome</keyword>
<keyword id="KW-0964">Secreted</keyword>
<keyword id="KW-0732">Signal</keyword>
<gene>
    <name type="primary">NXPH2</name>
    <name type="synonym">NPH2</name>
</gene>
<accession>Q28145</accession>
<protein>
    <recommendedName>
        <fullName>Neurexophilin-2</fullName>
        <shortName>Neurophilin-2</shortName>
    </recommendedName>
</protein>
<proteinExistence type="evidence at protein level"/>
<reference key="1">
    <citation type="journal article" date="1996" name="J. Neurosci.">
        <title>Structure and evolution of neurexophilin.</title>
        <authorList>
            <person name="Petrenko A.G."/>
            <person name="Ullrich B."/>
            <person name="Missler M."/>
            <person name="Krasnoperov V."/>
            <person name="Rosahl T.W."/>
            <person name="Suedhof T.C."/>
        </authorList>
    </citation>
    <scope>NUCLEOTIDE SEQUENCE [MRNA]</scope>
    <source>
        <tissue>Brain</tissue>
    </source>
</reference>
<reference key="2">
    <citation type="journal article" date="1993" name="J. Biol. Chem.">
        <title>Polypeptide composition of the alpha-latrotoxin receptor. High affinity binding protein consists of a family of related high molecular weight polypeptides complexed to a low molecular weight protein.</title>
        <authorList>
            <person name="Petrenko A.G."/>
            <person name="Lazaryeva V.D."/>
            <person name="Geppert M."/>
            <person name="Tarasyuk T.A."/>
            <person name="Moomaw C."/>
            <person name="Khokhlatchev A.V."/>
            <person name="Ushkaryov Y.A."/>
            <person name="Slaughter C."/>
            <person name="Nasimov I.V."/>
            <person name="Suedhof T.C."/>
        </authorList>
    </citation>
    <scope>PROTEIN SEQUENCE OF 166-180</scope>
</reference>
<organism>
    <name type="scientific">Bos taurus</name>
    <name type="common">Bovine</name>
    <dbReference type="NCBI Taxonomy" id="9913"/>
    <lineage>
        <taxon>Eukaryota</taxon>
        <taxon>Metazoa</taxon>
        <taxon>Chordata</taxon>
        <taxon>Craniata</taxon>
        <taxon>Vertebrata</taxon>
        <taxon>Euteleostomi</taxon>
        <taxon>Mammalia</taxon>
        <taxon>Eutheria</taxon>
        <taxon>Laurasiatheria</taxon>
        <taxon>Artiodactyla</taxon>
        <taxon>Ruminantia</taxon>
        <taxon>Pecora</taxon>
        <taxon>Bovidae</taxon>
        <taxon>Bovinae</taxon>
        <taxon>Bos</taxon>
    </lineage>
</organism>
<dbReference type="EMBL" id="L27868">
    <property type="protein sequence ID" value="AAB18419.1"/>
    <property type="molecule type" value="mRNA"/>
</dbReference>
<dbReference type="RefSeq" id="NP_776831.1">
    <property type="nucleotide sequence ID" value="NM_174406.2"/>
</dbReference>
<dbReference type="SMR" id="Q28145"/>
<dbReference type="FunCoup" id="Q28145">
    <property type="interactions" value="28"/>
</dbReference>
<dbReference type="STRING" id="9913.ENSBTAP00000024152"/>
<dbReference type="GlyCosmos" id="Q28145">
    <property type="glycosylation" value="4 sites, No reported glycans"/>
</dbReference>
<dbReference type="GlyGen" id="Q28145">
    <property type="glycosylation" value="4 sites"/>
</dbReference>
<dbReference type="PaxDb" id="9913-ENSBTAP00000024152"/>
<dbReference type="Ensembl" id="ENSBTAT00000024152.5">
    <property type="protein sequence ID" value="ENSBTAP00000024152.4"/>
    <property type="gene ID" value="ENSBTAG00000018147.5"/>
</dbReference>
<dbReference type="GeneID" id="281956"/>
<dbReference type="KEGG" id="bta:281956"/>
<dbReference type="CTD" id="11249"/>
<dbReference type="VEuPathDB" id="HostDB:ENSBTAG00000018147"/>
<dbReference type="VGNC" id="VGNC:32381">
    <property type="gene designation" value="NXPH2"/>
</dbReference>
<dbReference type="eggNOG" id="ENOG502QUPW">
    <property type="taxonomic scope" value="Eukaryota"/>
</dbReference>
<dbReference type="GeneTree" id="ENSGT00950000182883"/>
<dbReference type="HOGENOM" id="CLU_067114_2_1_1"/>
<dbReference type="InParanoid" id="Q28145"/>
<dbReference type="OMA" id="IFCDAKQ"/>
<dbReference type="OrthoDB" id="9863867at2759"/>
<dbReference type="TreeFam" id="TF333047"/>
<dbReference type="Proteomes" id="UP000009136">
    <property type="component" value="Chromosome 2"/>
</dbReference>
<dbReference type="Bgee" id="ENSBTAG00000018147">
    <property type="expression patterns" value="Expressed in occipital lobe and 41 other cell types or tissues"/>
</dbReference>
<dbReference type="GO" id="GO:0005576">
    <property type="term" value="C:extracellular region"/>
    <property type="evidence" value="ECO:0007669"/>
    <property type="project" value="UniProtKB-SubCell"/>
</dbReference>
<dbReference type="GO" id="GO:0005102">
    <property type="term" value="F:signaling receptor binding"/>
    <property type="evidence" value="ECO:0000318"/>
    <property type="project" value="GO_Central"/>
</dbReference>
<dbReference type="InterPro" id="IPR010450">
    <property type="entry name" value="Nxph"/>
</dbReference>
<dbReference type="InterPro" id="IPR026845">
    <property type="entry name" value="NXPH/NXPE"/>
</dbReference>
<dbReference type="PANTHER" id="PTHR17103">
    <property type="entry name" value="NEUREXOPHILIN"/>
    <property type="match status" value="1"/>
</dbReference>
<dbReference type="PANTHER" id="PTHR17103:SF11">
    <property type="entry name" value="NEUREXOPHILIN-2"/>
    <property type="match status" value="1"/>
</dbReference>
<dbReference type="Pfam" id="PF06312">
    <property type="entry name" value="Neurexophilin"/>
    <property type="match status" value="1"/>
</dbReference>
<dbReference type="PIRSF" id="PIRSF038019">
    <property type="entry name" value="Neurexophilin"/>
    <property type="match status" value="1"/>
</dbReference>
<sequence>MRLRPLPLVVVPGLLQLLFCDSEKVVHATEGLDWEDKDATGTLVGNVVHSRIINPLRLFVKQSPVPKPGHLAYADSMENFWDWLANITEVQEPLARTKRRPIVKTGKFKKMFGWGDFHSNIKTVKLNLLITGKIVDHGNGTFSVYFRHNSTGLGNVSVSLVPPSKVVEFEVSPQSTLETKESKSFNCRIEYEKTDRAKKTALCNFDPSKICYQEQTQSHVSWLCSKPFKVICIYIAFYSVDYKLVQKVCPDYNYHSETPYLSSG</sequence>
<feature type="signal peptide" evidence="2">
    <location>
        <begin position="1"/>
        <end position="22"/>
    </location>
</feature>
<feature type="chain" id="PRO_0000020062" description="Neurexophilin-2">
    <location>
        <begin position="23"/>
        <end position="264"/>
    </location>
</feature>
<feature type="region of interest" description="II">
    <location>
        <begin position="23"/>
        <end position="90"/>
    </location>
</feature>
<feature type="region of interest" description="III">
    <location>
        <begin position="91"/>
        <end position="169"/>
    </location>
</feature>
<feature type="region of interest" description="IV (linker domain)">
    <location>
        <begin position="170"/>
        <end position="178"/>
    </location>
</feature>
<feature type="region of interest" description="V (Cys-rich)">
    <location>
        <begin position="179"/>
        <end position="264"/>
    </location>
</feature>
<feature type="glycosylation site" description="N-linked (GlcNAc...) asparagine" evidence="2">
    <location>
        <position position="86"/>
    </location>
</feature>
<feature type="glycosylation site" description="N-linked (GlcNAc...) asparagine" evidence="2">
    <location>
        <position position="139"/>
    </location>
</feature>
<feature type="glycosylation site" description="N-linked (GlcNAc...) asparagine" evidence="2">
    <location>
        <position position="149"/>
    </location>
</feature>
<feature type="glycosylation site" description="N-linked (GlcNAc...) asparagine" evidence="2">
    <location>
        <position position="155"/>
    </location>
</feature>
<evidence type="ECO:0000250" key="1"/>
<evidence type="ECO:0000255" key="2"/>
<evidence type="ECO:0000305" key="3"/>